<evidence type="ECO:0000250" key="1">
    <source>
        <dbReference type="UniProtKB" id="Q8VHF2"/>
    </source>
</evidence>
<evidence type="ECO:0000250" key="2">
    <source>
        <dbReference type="UniProtKB" id="Q9HBB8"/>
    </source>
</evidence>
<evidence type="ECO:0000255" key="3"/>
<evidence type="ECO:0000255" key="4">
    <source>
        <dbReference type="PROSITE-ProRule" id="PRU00043"/>
    </source>
</evidence>
<evidence type="ECO:0000256" key="5">
    <source>
        <dbReference type="SAM" id="MobiDB-lite"/>
    </source>
</evidence>
<evidence type="ECO:0000269" key="6">
    <source>
    </source>
</evidence>
<evidence type="ECO:0000303" key="7">
    <source>
    </source>
</evidence>
<evidence type="ECO:0000305" key="8"/>
<evidence type="ECO:0000305" key="9">
    <source>
    </source>
</evidence>
<evidence type="ECO:0000312" key="10">
    <source>
        <dbReference type="EMBL" id="AAF70456.1"/>
    </source>
</evidence>
<evidence type="ECO:0000312" key="11">
    <source>
        <dbReference type="RGD" id="620504"/>
    </source>
</evidence>
<evidence type="ECO:0007744" key="12">
    <source>
    </source>
</evidence>
<sequence>MGAPALLWPPLLLPLLTVLFGHLPGTLAQAQVCSANQTVFTMNENTTVSGPLADIFVPEDQYVTLGQLSTPNAFKVEGNKLFLIVTPDYEENSLLEAVLECKRGDTLVTQFRVFVAVLDINDNAPEFPFTIKEYNVSEDTRVNTIVIPETELKATDADKDDILVYTLQEVTPNASKFFSLVGINSPALKLDQTLDYYKSPNMTFRLLARDTREENVIPSHTATATVVLNVLPADLRTPWFLPCSFTDDYFCIQAQYHTVIPTGHKLPSPLILSPGPIYAVDGDQAINQPIVYSIMMGNTDDTFIINKDDGNLTMAKSIPSPMTFTLVVRAEQADMARYSVTQAVVEARDVTGNPLQFSQSLYFGTVVLGSEAGTAVKDKTFPSEILRIQAQYLGFPDLNSAVTYQVTNSSEFIMNKDILLTTVPMETERTIRIEVEANNTVTKDIATTIVEIQVSEREPPSTESPTPPEAGGTTGPSSNTTLETPSTSGTSQGPATTSSGGSAGPFPPAGTTLSPLTSAPTVPGGSPTLGISTSPQTATPGGDATQTPKPGTSQPMVPTPGASTSSQPATPSGSSTQTPKPGTSQPMVPTPGASTSSQPATPSGSSTQTPRPGTSQPMVPTPGASTSSQPATPSGSTQTPKPGTSQPTTTGPISGVGELGDGQRFSTVDMAVLGGVLGALLLLALIFLIILIHKHYRHRFTCCSGKAKEPQPSGYDNLTFLPDNKAKWSPTSNRKPEPGPEPVQPPLRPPSPMSSSPTPPSSMPPSPQPKASGSPKTVQAGDSPSAVRSILTKERRPEGEGGYKAVWFGKDIGAEADVVVLNEPTADVDSASASGSEGSDDDDDPDQKKSLRLGAVADNTYV</sequence>
<keyword id="KW-0025">Alternative splicing</keyword>
<keyword id="KW-0106">Calcium</keyword>
<keyword id="KW-1003">Cell membrane</keyword>
<keyword id="KW-0966">Cell projection</keyword>
<keyword id="KW-0221">Differentiation</keyword>
<keyword id="KW-0903">Direct protein sequencing</keyword>
<keyword id="KW-0325">Glycoprotein</keyword>
<keyword id="KW-0472">Membrane</keyword>
<keyword id="KW-0597">Phosphoprotein</keyword>
<keyword id="KW-1185">Reference proteome</keyword>
<keyword id="KW-0677">Repeat</keyword>
<keyword id="KW-0732">Signal</keyword>
<keyword id="KW-0812">Transmembrane</keyword>
<keyword id="KW-1133">Transmembrane helix</keyword>
<organism evidence="10">
    <name type="scientific">Rattus norvegicus</name>
    <name type="common">Rat</name>
    <dbReference type="NCBI Taxonomy" id="10116"/>
    <lineage>
        <taxon>Eukaryota</taxon>
        <taxon>Metazoa</taxon>
        <taxon>Chordata</taxon>
        <taxon>Craniata</taxon>
        <taxon>Vertebrata</taxon>
        <taxon>Euteleostomi</taxon>
        <taxon>Mammalia</taxon>
        <taxon>Eutheria</taxon>
        <taxon>Euarchontoglires</taxon>
        <taxon>Glires</taxon>
        <taxon>Rodentia</taxon>
        <taxon>Myomorpha</taxon>
        <taxon>Muroidea</taxon>
        <taxon>Muridae</taxon>
        <taxon>Murinae</taxon>
        <taxon>Rattus</taxon>
    </lineage>
</organism>
<dbReference type="EMBL" id="AF221952">
    <property type="protein sequence ID" value="AAF70456.1"/>
    <property type="molecule type" value="mRNA"/>
</dbReference>
<dbReference type="EMBL" id="BC098904">
    <property type="protein sequence ID" value="AAH98904.1"/>
    <property type="molecule type" value="mRNA"/>
</dbReference>
<dbReference type="RefSeq" id="NP_612534.1">
    <molecule id="Q9JIK1-1"/>
    <property type="nucleotide sequence ID" value="NM_138525.2"/>
</dbReference>
<dbReference type="SMR" id="Q9JIK1"/>
<dbReference type="FunCoup" id="Q9JIK1">
    <property type="interactions" value="38"/>
</dbReference>
<dbReference type="STRING" id="10116.ENSRNOP00000044906"/>
<dbReference type="GlyCosmos" id="Q9JIK1">
    <property type="glycosylation" value="9 sites, No reported glycans"/>
</dbReference>
<dbReference type="GlyGen" id="Q9JIK1">
    <property type="glycosylation" value="18 sites"/>
</dbReference>
<dbReference type="iPTMnet" id="Q9JIK1"/>
<dbReference type="PhosphoSitePlus" id="Q9JIK1"/>
<dbReference type="Ensembl" id="ENSRNOT00000044238.4">
    <molecule id="Q9JIK1-1"/>
    <property type="protein sequence ID" value="ENSRNOP00000044906.3"/>
    <property type="gene ID" value="ENSRNOG00000017762.8"/>
</dbReference>
<dbReference type="GeneID" id="171554"/>
<dbReference type="KEGG" id="rno:171554"/>
<dbReference type="UCSC" id="RGD:620504">
    <molecule id="Q9JIK1-1"/>
    <property type="organism name" value="rat"/>
</dbReference>
<dbReference type="AGR" id="RGD:620504"/>
<dbReference type="CTD" id="53841"/>
<dbReference type="RGD" id="620504">
    <property type="gene designation" value="Cdhr5"/>
</dbReference>
<dbReference type="eggNOG" id="KOG3594">
    <property type="taxonomic scope" value="Eukaryota"/>
</dbReference>
<dbReference type="GeneTree" id="ENSGT00940000162463"/>
<dbReference type="HOGENOM" id="CLU_021415_0_0_1"/>
<dbReference type="InParanoid" id="Q9JIK1"/>
<dbReference type="OMA" id="PDYEANT"/>
<dbReference type="OrthoDB" id="8958491at2759"/>
<dbReference type="PhylomeDB" id="Q9JIK1"/>
<dbReference type="TreeFam" id="TF350567"/>
<dbReference type="PRO" id="PR:Q9JIK1"/>
<dbReference type="Proteomes" id="UP000002494">
    <property type="component" value="Chromosome 1"/>
</dbReference>
<dbReference type="Bgee" id="ENSRNOG00000017762">
    <property type="expression patterns" value="Expressed in jejunum and 17 other cell types or tissues"/>
</dbReference>
<dbReference type="GO" id="GO:0016324">
    <property type="term" value="C:apical plasma membrane"/>
    <property type="evidence" value="ECO:0000250"/>
    <property type="project" value="UniProtKB"/>
</dbReference>
<dbReference type="GO" id="GO:0005903">
    <property type="term" value="C:brush border"/>
    <property type="evidence" value="ECO:0000266"/>
    <property type="project" value="RGD"/>
</dbReference>
<dbReference type="GO" id="GO:0031526">
    <property type="term" value="C:brush border membrane"/>
    <property type="evidence" value="ECO:0000250"/>
    <property type="project" value="UniProtKB"/>
</dbReference>
<dbReference type="GO" id="GO:0005905">
    <property type="term" value="C:clathrin-coated pit"/>
    <property type="evidence" value="ECO:0000314"/>
    <property type="project" value="RGD"/>
</dbReference>
<dbReference type="GO" id="GO:0016020">
    <property type="term" value="C:membrane"/>
    <property type="evidence" value="ECO:0000303"/>
    <property type="project" value="UniProtKB"/>
</dbReference>
<dbReference type="GO" id="GO:0005902">
    <property type="term" value="C:microvillus"/>
    <property type="evidence" value="ECO:0000266"/>
    <property type="project" value="RGD"/>
</dbReference>
<dbReference type="GO" id="GO:0031528">
    <property type="term" value="C:microvillus membrane"/>
    <property type="evidence" value="ECO:0000250"/>
    <property type="project" value="UniProtKB"/>
</dbReference>
<dbReference type="GO" id="GO:0005886">
    <property type="term" value="C:plasma membrane"/>
    <property type="evidence" value="ECO:0000250"/>
    <property type="project" value="UniProtKB"/>
</dbReference>
<dbReference type="GO" id="GO:0008013">
    <property type="term" value="F:beta-catenin binding"/>
    <property type="evidence" value="ECO:0000266"/>
    <property type="project" value="RGD"/>
</dbReference>
<dbReference type="GO" id="GO:0005509">
    <property type="term" value="F:calcium ion binding"/>
    <property type="evidence" value="ECO:0000314"/>
    <property type="project" value="UniProtKB"/>
</dbReference>
<dbReference type="GO" id="GO:0050839">
    <property type="term" value="F:cell adhesion molecule binding"/>
    <property type="evidence" value="ECO:0000250"/>
    <property type="project" value="UniProtKB"/>
</dbReference>
<dbReference type="GO" id="GO:1904970">
    <property type="term" value="P:brush border assembly"/>
    <property type="evidence" value="ECO:0000266"/>
    <property type="project" value="RGD"/>
</dbReference>
<dbReference type="GO" id="GO:0007155">
    <property type="term" value="P:cell adhesion"/>
    <property type="evidence" value="ECO:0000314"/>
    <property type="project" value="UniProtKB"/>
</dbReference>
<dbReference type="GO" id="GO:0030154">
    <property type="term" value="P:cell differentiation"/>
    <property type="evidence" value="ECO:0007669"/>
    <property type="project" value="UniProtKB-KW"/>
</dbReference>
<dbReference type="GO" id="GO:0007156">
    <property type="term" value="P:homophilic cell adhesion via plasma membrane adhesion molecules"/>
    <property type="evidence" value="ECO:0007669"/>
    <property type="project" value="InterPro"/>
</dbReference>
<dbReference type="GO" id="GO:0090675">
    <property type="term" value="P:intermicrovillar adhesion"/>
    <property type="evidence" value="ECO:0000250"/>
    <property type="project" value="UniProtKB"/>
</dbReference>
<dbReference type="GO" id="GO:0032532">
    <property type="term" value="P:regulation of microvillus length"/>
    <property type="evidence" value="ECO:0000250"/>
    <property type="project" value="UniProtKB"/>
</dbReference>
<dbReference type="CDD" id="cd11304">
    <property type="entry name" value="Cadherin_repeat"/>
    <property type="match status" value="2"/>
</dbReference>
<dbReference type="FunFam" id="2.60.40.60:FF:000261">
    <property type="entry name" value="Cadherin-related family member 5"/>
    <property type="match status" value="1"/>
</dbReference>
<dbReference type="FunFam" id="2.60.40.60:FF:000469">
    <property type="entry name" value="Cadherin-related family member 5"/>
    <property type="match status" value="1"/>
</dbReference>
<dbReference type="Gene3D" id="2.60.40.60">
    <property type="entry name" value="Cadherins"/>
    <property type="match status" value="3"/>
</dbReference>
<dbReference type="InterPro" id="IPR039808">
    <property type="entry name" value="Cadherin"/>
</dbReference>
<dbReference type="InterPro" id="IPR002126">
    <property type="entry name" value="Cadherin-like_dom"/>
</dbReference>
<dbReference type="InterPro" id="IPR015919">
    <property type="entry name" value="Cadherin-like_sf"/>
</dbReference>
<dbReference type="InterPro" id="IPR020894">
    <property type="entry name" value="Cadherin_CS"/>
</dbReference>
<dbReference type="PANTHER" id="PTHR24027">
    <property type="entry name" value="CADHERIN-23"/>
    <property type="match status" value="1"/>
</dbReference>
<dbReference type="PANTHER" id="PTHR24027:SF414">
    <property type="entry name" value="CADHERIN-RELATED FAMILY MEMBER 5 ISOFORM X1"/>
    <property type="match status" value="1"/>
</dbReference>
<dbReference type="SMART" id="SM00112">
    <property type="entry name" value="CA"/>
    <property type="match status" value="3"/>
</dbReference>
<dbReference type="SUPFAM" id="SSF49313">
    <property type="entry name" value="Cadherin-like"/>
    <property type="match status" value="2"/>
</dbReference>
<dbReference type="PROSITE" id="PS00232">
    <property type="entry name" value="CADHERIN_1"/>
    <property type="match status" value="1"/>
</dbReference>
<dbReference type="PROSITE" id="PS50268">
    <property type="entry name" value="CADHERIN_2"/>
    <property type="match status" value="3"/>
</dbReference>
<name>CDHR5_RAT</name>
<comment type="function">
    <text evidence="9">Intermicrovillar adhesion molecule that forms, via its extracellular domain, calcium-dependent heterophilic complexes with CDHR2 on adjacent microvilli. Thereby, controls the packing of microvilli at the apical membrane of epithelial cells. Through its cytoplasmic domain, interacts with microvillus cytoplasmic proteins to form the intermicrovillar adhesion complex/IMAC. This complex plays a central role in microvilli and epithelial brush border differentiation.</text>
</comment>
<comment type="subunit">
    <text evidence="2">Part of the IMAC/intermicrovillar adhesion complex/intermicrovillar tip-link complex composed of ANKS4B, MYO7B, USH1C, CDHR2 and CDHR5. Interacts (via cytoplasmic domain) with USH1C and MYO7B; required for proper localization of CDHR5 to microvilli tips and its function in brush border differentiation.</text>
</comment>
<comment type="subcellular location">
    <subcellularLocation>
        <location evidence="2">Apical cell membrane</location>
        <topology evidence="2">Single-pass type I membrane protein</topology>
    </subcellularLocation>
    <subcellularLocation>
        <location evidence="2">Cell projection</location>
        <location evidence="2">Microvillus membrane</location>
        <topology evidence="2">Single-pass type I membrane protein</topology>
    </subcellularLocation>
</comment>
<comment type="alternative products">
    <event type="alternative splicing"/>
    <isoform>
        <id>Q9JIK1-1</id>
        <name evidence="6">1</name>
        <sequence type="displayed"/>
    </isoform>
    <isoform>
        <id>Q9JIK1-2</id>
        <name evidence="6">2</name>
        <sequence type="described" ref="VSP_050688"/>
    </isoform>
</comment>
<comment type="tissue specificity">
    <text evidence="6">Expressed predominantly in kidney. Also detected in lung and small intestine.</text>
</comment>
<comment type="developmental stage">
    <text evidence="6">At embryonic day 19, both maternal and embryonic kidneys express isoform 1 almost exclusively. In the postpartum female and neonate, expression of isoform 2 increases.</text>
</comment>
<comment type="PTM">
    <text evidence="6">N- and O-glycosylated.</text>
</comment>
<gene>
    <name evidence="11" type="primary">Cdhr5</name>
    <name evidence="11" type="synonym">Mucdhl</name>
    <name evidence="11" type="synonym">Mupcdh</name>
</gene>
<proteinExistence type="evidence at protein level"/>
<reference evidence="8" key="1">
    <citation type="journal article" date="2000" name="J. Biol. Chem.">
        <title>mu-protocadherin, a novel developmentally regulated protocadherin with mucin-like domains.</title>
        <authorList>
            <person name="Goldberg M."/>
            <person name="Peshkovsky C."/>
            <person name="Shifteh A."/>
            <person name="Al-Awqati Q."/>
        </authorList>
    </citation>
    <scope>NUCLEOTIDE SEQUENCE [MRNA] (ISOFORMS 1 AND 2)</scope>
    <scope>PROTEIN SEQUENCE OF 132-145; 176-198; 265-280; 416-438 AND 708-722</scope>
    <scope>FUNCTION</scope>
    <scope>TISSUE SPECIFICITY</scope>
    <scope>DEVELOPMENTAL STAGE</scope>
    <scope>GLYCOSYLATION</scope>
    <source>
        <strain evidence="10">Sprague-Dawley</strain>
        <tissue evidence="6">Kidney</tissue>
    </source>
</reference>
<reference key="2">
    <citation type="journal article" date="2004" name="Genome Res.">
        <title>The status, quality, and expansion of the NIH full-length cDNA project: the Mammalian Gene Collection (MGC).</title>
        <authorList>
            <consortium name="The MGC Project Team"/>
        </authorList>
    </citation>
    <scope>NUCLEOTIDE SEQUENCE [LARGE SCALE MRNA] (ISOFORM 1)</scope>
    <source>
        <tissue>Placenta</tissue>
    </source>
</reference>
<reference key="3">
    <citation type="journal article" date="2012" name="Nat. Commun.">
        <title>Quantitative maps of protein phosphorylation sites across 14 different rat organs and tissues.</title>
        <authorList>
            <person name="Lundby A."/>
            <person name="Secher A."/>
            <person name="Lage K."/>
            <person name="Nordsborg N.B."/>
            <person name="Dmytriyev A."/>
            <person name="Lundby C."/>
            <person name="Olsen J.V."/>
        </authorList>
    </citation>
    <scope>PHOSPHORYLATION [LARGE SCALE ANALYSIS] AT SER-729</scope>
    <scope>IDENTIFICATION BY MASS SPECTROMETRY [LARGE SCALE ANALYSIS]</scope>
</reference>
<accession>Q9JIK1</accession>
<accession>Q4FZY9</accession>
<protein>
    <recommendedName>
        <fullName evidence="8">Cadherin-related family member 5</fullName>
    </recommendedName>
    <alternativeName>
        <fullName evidence="7">GP100</fullName>
    </alternativeName>
    <alternativeName>
        <fullName evidence="7">Mu-protocadherin</fullName>
    </alternativeName>
</protein>
<feature type="signal peptide" evidence="3">
    <location>
        <begin position="1"/>
        <end position="28"/>
    </location>
</feature>
<feature type="chain" id="PRO_0000004014" description="Cadherin-related family member 5">
    <location>
        <begin position="29"/>
        <end position="862"/>
    </location>
</feature>
<feature type="topological domain" description="Extracellular" evidence="3">
    <location>
        <begin position="29"/>
        <end position="671"/>
    </location>
</feature>
<feature type="transmembrane region" description="Helical" evidence="3">
    <location>
        <begin position="672"/>
        <end position="692"/>
    </location>
</feature>
<feature type="topological domain" description="Cytoplasmic" evidence="3">
    <location>
        <begin position="693"/>
        <end position="862"/>
    </location>
</feature>
<feature type="domain" description="Cadherin 1" evidence="4 8">
    <location>
        <begin position="40"/>
        <end position="127"/>
    </location>
</feature>
<feature type="domain" description="Cadherin 2" evidence="4 8">
    <location>
        <begin position="128"/>
        <end position="240"/>
    </location>
</feature>
<feature type="domain" description="Cadherin 3" evidence="4 8">
    <location>
        <begin position="252"/>
        <end position="357"/>
    </location>
</feature>
<feature type="domain" description="Cadherin 4" evidence="4 8">
    <location>
        <begin position="358"/>
        <end position="462"/>
    </location>
</feature>
<feature type="repeat" description="1" evidence="8">
    <location>
        <begin position="545"/>
        <end position="575"/>
    </location>
</feature>
<feature type="repeat" description="2" evidence="8">
    <location>
        <begin position="576"/>
        <end position="606"/>
    </location>
</feature>
<feature type="repeat" description="3" evidence="8">
    <location>
        <begin position="607"/>
        <end position="636"/>
    </location>
</feature>
<feature type="repeat" description="4; truncated">
    <location>
        <begin position="637"/>
        <end position="648"/>
    </location>
</feature>
<feature type="region of interest" description="Disordered" evidence="5">
    <location>
        <begin position="452"/>
        <end position="658"/>
    </location>
</feature>
<feature type="region of interest" description="4 X 31 AA approximate tandem repeats">
    <location>
        <begin position="545"/>
        <end position="648"/>
    </location>
</feature>
<feature type="region of interest" description="Mediates interaction with USH1C and MYO7B and is required for proper localization to microvilli tips and function in microvilli organization" evidence="2">
    <location>
        <begin position="693"/>
        <end position="862"/>
    </location>
</feature>
<feature type="region of interest" description="Disordered" evidence="5">
    <location>
        <begin position="706"/>
        <end position="803"/>
    </location>
</feature>
<feature type="region of interest" description="Disordered" evidence="5">
    <location>
        <begin position="821"/>
        <end position="862"/>
    </location>
</feature>
<feature type="compositionally biased region" description="Low complexity" evidence="5">
    <location>
        <begin position="461"/>
        <end position="500"/>
    </location>
</feature>
<feature type="compositionally biased region" description="Polar residues" evidence="5">
    <location>
        <begin position="529"/>
        <end position="652"/>
    </location>
</feature>
<feature type="compositionally biased region" description="Pro residues" evidence="5">
    <location>
        <begin position="739"/>
        <end position="768"/>
    </location>
</feature>
<feature type="compositionally biased region" description="Basic and acidic residues" evidence="5">
    <location>
        <begin position="791"/>
        <end position="801"/>
    </location>
</feature>
<feature type="compositionally biased region" description="Low complexity" evidence="5">
    <location>
        <begin position="827"/>
        <end position="837"/>
    </location>
</feature>
<feature type="modified residue" description="Phosphoserine" evidence="12">
    <location>
        <position position="729"/>
    </location>
</feature>
<feature type="modified residue" description="Phosphoserine" evidence="1">
    <location>
        <position position="751"/>
    </location>
</feature>
<feature type="modified residue" description="Phosphoserine" evidence="1">
    <location>
        <position position="755"/>
    </location>
</feature>
<feature type="modified residue" description="Phosphothreonine" evidence="1">
    <location>
        <position position="758"/>
    </location>
</feature>
<feature type="modified residue" description="Phosphoserine" evidence="1">
    <location>
        <position position="766"/>
    </location>
</feature>
<feature type="modified residue" description="Phosphoserine" evidence="1">
    <location>
        <position position="783"/>
    </location>
</feature>
<feature type="modified residue" description="Phosphothreonine" evidence="2">
    <location>
        <position position="825"/>
    </location>
</feature>
<feature type="modified residue" description="Phosphoserine" evidence="2">
    <location>
        <position position="832"/>
    </location>
</feature>
<feature type="modified residue" description="Phosphoserine" evidence="2">
    <location>
        <position position="834"/>
    </location>
</feature>
<feature type="modified residue" description="Phosphoserine" evidence="2">
    <location>
        <position position="836"/>
    </location>
</feature>
<feature type="glycosylation site" description="N-linked (GlcNAc...) asparagine" evidence="8">
    <location>
        <position position="36"/>
    </location>
</feature>
<feature type="glycosylation site" description="N-linked (GlcNAc...) asparagine" evidence="8">
    <location>
        <position position="45"/>
    </location>
</feature>
<feature type="glycosylation site" description="N-linked (GlcNAc...) asparagine" evidence="8">
    <location>
        <position position="135"/>
    </location>
</feature>
<feature type="glycosylation site" description="N-linked (GlcNAc...) asparagine" evidence="8">
    <location>
        <position position="173"/>
    </location>
</feature>
<feature type="glycosylation site" description="N-linked (GlcNAc...) asparagine" evidence="8">
    <location>
        <position position="201"/>
    </location>
</feature>
<feature type="glycosylation site" description="N-linked (GlcNAc...) asparagine" evidence="8">
    <location>
        <position position="311"/>
    </location>
</feature>
<feature type="glycosylation site" description="N-linked (GlcNAc...) asparagine" evidence="8">
    <location>
        <position position="408"/>
    </location>
</feature>
<feature type="glycosylation site" description="N-linked (GlcNAc...) asparagine" evidence="8">
    <location>
        <position position="438"/>
    </location>
</feature>
<feature type="glycosylation site" description="N-linked (GlcNAc...) asparagine" evidence="8">
    <location>
        <position position="479"/>
    </location>
</feature>
<feature type="splice variant" id="VSP_050688" description="In isoform 2." evidence="7">
    <location>
        <begin position="464"/>
        <end position="655"/>
    </location>
</feature>